<organism>
    <name type="scientific">Zymomonas mobilis subsp. mobilis (strain ATCC 31821 / ZM4 / CP4)</name>
    <dbReference type="NCBI Taxonomy" id="264203"/>
    <lineage>
        <taxon>Bacteria</taxon>
        <taxon>Pseudomonadati</taxon>
        <taxon>Pseudomonadota</taxon>
        <taxon>Alphaproteobacteria</taxon>
        <taxon>Sphingomonadales</taxon>
        <taxon>Zymomonadaceae</taxon>
        <taxon>Zymomonas</taxon>
    </lineage>
</organism>
<name>SYDND_ZYMMO</name>
<keyword id="KW-0030">Aminoacyl-tRNA synthetase</keyword>
<keyword id="KW-0067">ATP-binding</keyword>
<keyword id="KW-0963">Cytoplasm</keyword>
<keyword id="KW-0436">Ligase</keyword>
<keyword id="KW-0547">Nucleotide-binding</keyword>
<keyword id="KW-0648">Protein biosynthesis</keyword>
<keyword id="KW-1185">Reference proteome</keyword>
<feature type="chain" id="PRO_0000110988" description="Aspartate--tRNA(Asp/Asn) ligase">
    <location>
        <begin position="1"/>
        <end position="596"/>
    </location>
</feature>
<feature type="region of interest" description="Aspartate" evidence="1">
    <location>
        <begin position="199"/>
        <end position="202"/>
    </location>
</feature>
<feature type="binding site" evidence="1">
    <location>
        <position position="175"/>
    </location>
    <ligand>
        <name>L-aspartate</name>
        <dbReference type="ChEBI" id="CHEBI:29991"/>
    </ligand>
</feature>
<feature type="binding site" evidence="1">
    <location>
        <begin position="221"/>
        <end position="223"/>
    </location>
    <ligand>
        <name>ATP</name>
        <dbReference type="ChEBI" id="CHEBI:30616"/>
    </ligand>
</feature>
<feature type="binding site" evidence="1">
    <location>
        <position position="221"/>
    </location>
    <ligand>
        <name>L-aspartate</name>
        <dbReference type="ChEBI" id="CHEBI:29991"/>
    </ligand>
</feature>
<feature type="binding site" evidence="1">
    <location>
        <position position="451"/>
    </location>
    <ligand>
        <name>L-aspartate</name>
        <dbReference type="ChEBI" id="CHEBI:29991"/>
    </ligand>
</feature>
<feature type="binding site" evidence="1">
    <location>
        <position position="485"/>
    </location>
    <ligand>
        <name>ATP</name>
        <dbReference type="ChEBI" id="CHEBI:30616"/>
    </ligand>
</feature>
<feature type="binding site" evidence="1">
    <location>
        <position position="492"/>
    </location>
    <ligand>
        <name>L-aspartate</name>
        <dbReference type="ChEBI" id="CHEBI:29991"/>
    </ligand>
</feature>
<feature type="binding site" evidence="1">
    <location>
        <begin position="537"/>
        <end position="540"/>
    </location>
    <ligand>
        <name>ATP</name>
        <dbReference type="ChEBI" id="CHEBI:30616"/>
    </ligand>
</feature>
<feature type="site" description="Important for tRNA non-discrimination" evidence="1">
    <location>
        <position position="33"/>
    </location>
</feature>
<reference key="1">
    <citation type="journal article" date="2005" name="Nat. Biotechnol.">
        <title>The genome sequence of the ethanologenic bacterium Zymomonas mobilis ZM4.</title>
        <authorList>
            <person name="Seo J.-S."/>
            <person name="Chong H."/>
            <person name="Park H.S."/>
            <person name="Yoon K.-O."/>
            <person name="Jung C."/>
            <person name="Kim J.J."/>
            <person name="Hong J.H."/>
            <person name="Kim H."/>
            <person name="Kim J.-H."/>
            <person name="Kil J.-I."/>
            <person name="Park C.J."/>
            <person name="Oh H.-M."/>
            <person name="Lee J.-S."/>
            <person name="Jin S.-J."/>
            <person name="Um H.-W."/>
            <person name="Lee H.-J."/>
            <person name="Oh S.-J."/>
            <person name="Kim J.Y."/>
            <person name="Kang H.L."/>
            <person name="Lee S.Y."/>
            <person name="Lee K.J."/>
            <person name="Kang H.S."/>
        </authorList>
    </citation>
    <scope>NUCLEOTIDE SEQUENCE [LARGE SCALE GENOMIC DNA]</scope>
    <source>
        <strain>ATCC 31821 / ZM4 / CP4</strain>
    </source>
</reference>
<accession>Q5NPM1</accession>
<protein>
    <recommendedName>
        <fullName evidence="1">Aspartate--tRNA(Asp/Asn) ligase</fullName>
        <ecNumber evidence="1">6.1.1.23</ecNumber>
    </recommendedName>
    <alternativeName>
        <fullName evidence="1">Aspartyl-tRNA synthetase</fullName>
        <shortName evidence="1">AspRS</shortName>
    </alternativeName>
    <alternativeName>
        <fullName evidence="1">Non-discriminating aspartyl-tRNA synthetase</fullName>
        <shortName evidence="1">ND-AspRS</shortName>
    </alternativeName>
</protein>
<comment type="function">
    <text evidence="1">Aspartyl-tRNA synthetase with relaxed tRNA specificity since it is able to aspartylate not only its cognate tRNA(Asp) but also tRNA(Asn). Reaction proceeds in two steps: L-aspartate is first activated by ATP to form Asp-AMP and then transferred to the acceptor end of tRNA(Asp/Asn).</text>
</comment>
<comment type="catalytic activity">
    <reaction evidence="1">
        <text>tRNA(Asx) + L-aspartate + ATP = L-aspartyl-tRNA(Asx) + AMP + diphosphate</text>
        <dbReference type="Rhea" id="RHEA:18349"/>
        <dbReference type="Rhea" id="RHEA-COMP:9710"/>
        <dbReference type="Rhea" id="RHEA-COMP:9711"/>
        <dbReference type="ChEBI" id="CHEBI:29991"/>
        <dbReference type="ChEBI" id="CHEBI:30616"/>
        <dbReference type="ChEBI" id="CHEBI:33019"/>
        <dbReference type="ChEBI" id="CHEBI:78442"/>
        <dbReference type="ChEBI" id="CHEBI:78516"/>
        <dbReference type="ChEBI" id="CHEBI:456215"/>
        <dbReference type="EC" id="6.1.1.23"/>
    </reaction>
</comment>
<comment type="subunit">
    <text evidence="1">Homodimer.</text>
</comment>
<comment type="subcellular location">
    <subcellularLocation>
        <location evidence="1">Cytoplasm</location>
    </subcellularLocation>
</comment>
<comment type="similarity">
    <text evidence="1">Belongs to the class-II aminoacyl-tRNA synthetase family. Type 1 subfamily.</text>
</comment>
<proteinExistence type="inferred from homology"/>
<sequence>MHAYRTHNCSALRRANVGEKVRLSGWVHRKRDHGGLLFVDLRDHYGLTQIVADSDSAVFEKLDQLRLESVITVTGEVVERAPEVVNPNLATGEIEIRASEVDVQSFAQELPLPVAGEADYPEDIRLRYRYLDLRRDRLHRNIVLRSNVIASLRRRMIEQGFNEYQTPILTASSPEGARDYLVPSRVHPGKFYALPQAPQMFKQLMMVAGFDRYFQIAPCFRDEDARADRSPGEFYQLDFEMSFVTQEDVFATIEPVLAGVFEEFGGGKTVTPAPFPRIAYRDAMLYYGSDKPDLRNPLKISDVTEHFRDSGFGLFAGMVAKGGVVRAIPAPEAGKNSRKFFDDMNNWAREEGFAGLGYINIKNGEAGGPIARNLGEDATQKLLADLGLGENDGVFFAAGKEGEAARLAGLARNRVGELLDLIEKDSFRFCWVVDFPMFEYDEEAKQVIFSHNPFSMPQGGMEALETKDPLDILAYQYDIVCNGIELSSGAIRNHRPEIMYKAFEIAGYDQAMVDENFAGMINAFKYGAPPHGGAAPGVDRMVMLLAGEPNIREVVLFPMNQKAEDLMMGAPAAVSERQLKELSLRIAVKPTQKSAS</sequence>
<gene>
    <name evidence="1" type="primary">aspS</name>
    <name type="ordered locus">ZMO0715</name>
</gene>
<evidence type="ECO:0000255" key="1">
    <source>
        <dbReference type="HAMAP-Rule" id="MF_00044"/>
    </source>
</evidence>
<dbReference type="EC" id="6.1.1.23" evidence="1"/>
<dbReference type="EMBL" id="AE008692">
    <property type="protein sequence ID" value="AAV89339.1"/>
    <property type="molecule type" value="Genomic_DNA"/>
</dbReference>
<dbReference type="RefSeq" id="WP_011240602.1">
    <property type="nucleotide sequence ID" value="NZ_CP035711.1"/>
</dbReference>
<dbReference type="SMR" id="Q5NPM1"/>
<dbReference type="STRING" id="264203.ZMO0715"/>
<dbReference type="KEGG" id="zmo:ZMO0715"/>
<dbReference type="eggNOG" id="COG0173">
    <property type="taxonomic scope" value="Bacteria"/>
</dbReference>
<dbReference type="HOGENOM" id="CLU_014330_3_2_5"/>
<dbReference type="Proteomes" id="UP000001173">
    <property type="component" value="Chromosome"/>
</dbReference>
<dbReference type="GO" id="GO:0005737">
    <property type="term" value="C:cytoplasm"/>
    <property type="evidence" value="ECO:0007669"/>
    <property type="project" value="UniProtKB-SubCell"/>
</dbReference>
<dbReference type="GO" id="GO:0004815">
    <property type="term" value="F:aspartate-tRNA ligase activity"/>
    <property type="evidence" value="ECO:0007669"/>
    <property type="project" value="UniProtKB-UniRule"/>
</dbReference>
<dbReference type="GO" id="GO:0050560">
    <property type="term" value="F:aspartate-tRNA(Asn) ligase activity"/>
    <property type="evidence" value="ECO:0007669"/>
    <property type="project" value="UniProtKB-EC"/>
</dbReference>
<dbReference type="GO" id="GO:0005524">
    <property type="term" value="F:ATP binding"/>
    <property type="evidence" value="ECO:0007669"/>
    <property type="project" value="UniProtKB-UniRule"/>
</dbReference>
<dbReference type="GO" id="GO:0003676">
    <property type="term" value="F:nucleic acid binding"/>
    <property type="evidence" value="ECO:0007669"/>
    <property type="project" value="InterPro"/>
</dbReference>
<dbReference type="GO" id="GO:0006422">
    <property type="term" value="P:aspartyl-tRNA aminoacylation"/>
    <property type="evidence" value="ECO:0007669"/>
    <property type="project" value="UniProtKB-UniRule"/>
</dbReference>
<dbReference type="CDD" id="cd00777">
    <property type="entry name" value="AspRS_core"/>
    <property type="match status" value="1"/>
</dbReference>
<dbReference type="CDD" id="cd04317">
    <property type="entry name" value="EcAspRS_like_N"/>
    <property type="match status" value="1"/>
</dbReference>
<dbReference type="Gene3D" id="3.30.930.10">
    <property type="entry name" value="Bira Bifunctional Protein, Domain 2"/>
    <property type="match status" value="1"/>
</dbReference>
<dbReference type="Gene3D" id="3.30.1360.30">
    <property type="entry name" value="GAD-like domain"/>
    <property type="match status" value="1"/>
</dbReference>
<dbReference type="Gene3D" id="2.40.50.140">
    <property type="entry name" value="Nucleic acid-binding proteins"/>
    <property type="match status" value="1"/>
</dbReference>
<dbReference type="HAMAP" id="MF_00044">
    <property type="entry name" value="Asp_tRNA_synth_type1"/>
    <property type="match status" value="1"/>
</dbReference>
<dbReference type="InterPro" id="IPR004364">
    <property type="entry name" value="Aa-tRNA-synt_II"/>
</dbReference>
<dbReference type="InterPro" id="IPR006195">
    <property type="entry name" value="aa-tRNA-synth_II"/>
</dbReference>
<dbReference type="InterPro" id="IPR045864">
    <property type="entry name" value="aa-tRNA-synth_II/BPL/LPL"/>
</dbReference>
<dbReference type="InterPro" id="IPR004524">
    <property type="entry name" value="Asp-tRNA-ligase_1"/>
</dbReference>
<dbReference type="InterPro" id="IPR047089">
    <property type="entry name" value="Asp-tRNA-ligase_1_N"/>
</dbReference>
<dbReference type="InterPro" id="IPR002312">
    <property type="entry name" value="Asp/Asn-tRNA-synth_IIb"/>
</dbReference>
<dbReference type="InterPro" id="IPR047090">
    <property type="entry name" value="AspRS_core"/>
</dbReference>
<dbReference type="InterPro" id="IPR004115">
    <property type="entry name" value="GAD-like_sf"/>
</dbReference>
<dbReference type="InterPro" id="IPR029351">
    <property type="entry name" value="GAD_dom"/>
</dbReference>
<dbReference type="InterPro" id="IPR012340">
    <property type="entry name" value="NA-bd_OB-fold"/>
</dbReference>
<dbReference type="InterPro" id="IPR004365">
    <property type="entry name" value="NA-bd_OB_tRNA"/>
</dbReference>
<dbReference type="NCBIfam" id="TIGR00459">
    <property type="entry name" value="aspS_bact"/>
    <property type="match status" value="1"/>
</dbReference>
<dbReference type="NCBIfam" id="NF001750">
    <property type="entry name" value="PRK00476.1"/>
    <property type="match status" value="1"/>
</dbReference>
<dbReference type="PANTHER" id="PTHR22594:SF5">
    <property type="entry name" value="ASPARTATE--TRNA LIGASE, MITOCHONDRIAL"/>
    <property type="match status" value="1"/>
</dbReference>
<dbReference type="PANTHER" id="PTHR22594">
    <property type="entry name" value="ASPARTYL/LYSYL-TRNA SYNTHETASE"/>
    <property type="match status" value="1"/>
</dbReference>
<dbReference type="Pfam" id="PF02938">
    <property type="entry name" value="GAD"/>
    <property type="match status" value="1"/>
</dbReference>
<dbReference type="Pfam" id="PF00152">
    <property type="entry name" value="tRNA-synt_2"/>
    <property type="match status" value="1"/>
</dbReference>
<dbReference type="Pfam" id="PF01336">
    <property type="entry name" value="tRNA_anti-codon"/>
    <property type="match status" value="1"/>
</dbReference>
<dbReference type="PRINTS" id="PR01042">
    <property type="entry name" value="TRNASYNTHASP"/>
</dbReference>
<dbReference type="SUPFAM" id="SSF55681">
    <property type="entry name" value="Class II aaRS and biotin synthetases"/>
    <property type="match status" value="1"/>
</dbReference>
<dbReference type="SUPFAM" id="SSF55261">
    <property type="entry name" value="GAD domain-like"/>
    <property type="match status" value="1"/>
</dbReference>
<dbReference type="SUPFAM" id="SSF50249">
    <property type="entry name" value="Nucleic acid-binding proteins"/>
    <property type="match status" value="1"/>
</dbReference>
<dbReference type="PROSITE" id="PS50862">
    <property type="entry name" value="AA_TRNA_LIGASE_II"/>
    <property type="match status" value="1"/>
</dbReference>